<accession>P24221</accession>
<gene>
    <name type="primary">hutH</name>
</gene>
<evidence type="ECO:0000250" key="1"/>
<evidence type="ECO:0000305" key="2"/>
<comment type="catalytic activity">
    <reaction>
        <text>L-histidine = trans-urocanate + NH4(+)</text>
        <dbReference type="Rhea" id="RHEA:21232"/>
        <dbReference type="ChEBI" id="CHEBI:17771"/>
        <dbReference type="ChEBI" id="CHEBI:28938"/>
        <dbReference type="ChEBI" id="CHEBI:57595"/>
        <dbReference type="EC" id="4.3.1.3"/>
    </reaction>
</comment>
<comment type="pathway">
    <text>Amino-acid degradation; L-histidine degradation into L-glutamate; N-formimidoyl-L-glutamate from L-histidine: step 1/3.</text>
</comment>
<comment type="subcellular location">
    <subcellularLocation>
        <location evidence="2">Cytoplasm</location>
    </subcellularLocation>
</comment>
<comment type="induction">
    <text>By histidine.</text>
</comment>
<comment type="PTM">
    <text evidence="1">Contains an active site 4-methylidene-imidazol-5-one (MIO), which is formed autocatalytically by cyclization and dehydration of residues Cys-Ser-Gly.</text>
</comment>
<comment type="similarity">
    <text evidence="2">Belongs to the PAL/histidase family.</text>
</comment>
<comment type="sequence caution" evidence="2">
    <conflict type="erroneous initiation">
        <sequence resource="EMBL-CDS" id="AAA26769"/>
    </conflict>
</comment>
<feature type="chain" id="PRO_0000161038" description="Histidine ammonia-lyase">
    <location>
        <begin position="1"/>
        <end position="514"/>
    </location>
</feature>
<feature type="modified residue" description="2,3-didehydroalanine (Ser)" evidence="1">
    <location>
        <position position="144"/>
    </location>
</feature>
<feature type="cross-link" description="5-imidazolinone (Cys-Gly)" evidence="1">
    <location>
        <begin position="143"/>
        <end position="145"/>
    </location>
</feature>
<sequence>MHTVVVGTSGTTAEDVVAVARHGARVELSAAAVEALAAARLIVDALAAKPEPVYGVSTGFGALASRHIGTELRAQLQRNIVRSHAAGMGPRVEREVVRALMFLRLKTVASGHTGVRPEVAQTMADVLNAGITPVVHEYGSLGCSGDLAPLSHCALTLMGEGEAEGPDGTVRPAGELLAAHGIAPVELREKEGLALLNGTDGMLGMLVMALADLRNLYTSADITAALSLEALLGTDKVLAPELHAIRPHPGQGVSADNMSRVLAGSGLTGHHQDDAPRVQDAYSVRCAPQVNGAGRDTLDHAALVAGRELASSVDNPVVLPDGRVESNGNFHGAPVAYVLDFLAIVAADLGSICERRTDRLLDKNRSHGLPPFLADDAGVDSGLMIAQYTQAALVSEMKRLAVPASADSIPSSAMQEDHVSMGWSAARKLRTAVDNLARIVAVELYAATRAIELRAAEGLTPAPASEAVVAALRAAGAEGPGPDRFLAPDLAAADTFVREGRLVAAVEPVTGPLA</sequence>
<protein>
    <recommendedName>
        <fullName>Histidine ammonia-lyase</fullName>
        <shortName>Histidase</shortName>
        <ecNumber>4.3.1.3</ecNumber>
    </recommendedName>
</protein>
<organism>
    <name type="scientific">Streptomyces griseus</name>
    <dbReference type="NCBI Taxonomy" id="1911"/>
    <lineage>
        <taxon>Bacteria</taxon>
        <taxon>Bacillati</taxon>
        <taxon>Actinomycetota</taxon>
        <taxon>Actinomycetes</taxon>
        <taxon>Kitasatosporales</taxon>
        <taxon>Streptomycetaceae</taxon>
        <taxon>Streptomyces</taxon>
    </lineage>
</organism>
<name>HUTH_STRGR</name>
<keyword id="KW-0963">Cytoplasm</keyword>
<keyword id="KW-0369">Histidine metabolism</keyword>
<keyword id="KW-0456">Lyase</keyword>
<reference key="1">
    <citation type="journal article" date="1992" name="J. Bacteriol.">
        <title>Purification of histidase from Streptomyces griseus and nucleotide sequence of the hutH structural gene.</title>
        <authorList>
            <person name="Wu P.-C."/>
            <person name="Kroening T.A."/>
            <person name="White P.J."/>
            <person name="Kendrick K.E."/>
        </authorList>
    </citation>
    <scope>NUCLEOTIDE SEQUENCE [GENOMIC DNA]</scope>
    <source>
        <strain>ATCC 23345 / DSM 40236 / JCM 4644 / NBRC 12875 / NCIMB 13023 / NRRL B-2682 / VKM Ac-800 / IMRU 3463</strain>
    </source>
</reference>
<reference key="2">
    <citation type="journal article" date="1992" name="Gene">
        <title>Histidine ammonia-lyase from Streptomyces griseus.</title>
        <authorList>
            <person name="Wu P.-C."/>
            <person name="Kroening T.A."/>
            <person name="White P.J."/>
            <person name="Kendrick K.E."/>
        </authorList>
    </citation>
    <scope>NUCLEOTIDE SEQUENCE [GENOMIC DNA]</scope>
</reference>
<dbReference type="EC" id="4.3.1.3"/>
<dbReference type="EMBL" id="M77841">
    <property type="protein sequence ID" value="AAA26769.1"/>
    <property type="status" value="ALT_INIT"/>
    <property type="molecule type" value="Genomic_DNA"/>
</dbReference>
<dbReference type="PIR" id="JC1172">
    <property type="entry name" value="JC1172"/>
</dbReference>
<dbReference type="SMR" id="P24221"/>
<dbReference type="STRING" id="1911.GCA_001715295_02093"/>
<dbReference type="SABIO-RK" id="P24221"/>
<dbReference type="UniPathway" id="UPA00379">
    <property type="reaction ID" value="UER00549"/>
</dbReference>
<dbReference type="GO" id="GO:0005737">
    <property type="term" value="C:cytoplasm"/>
    <property type="evidence" value="ECO:0007669"/>
    <property type="project" value="UniProtKB-SubCell"/>
</dbReference>
<dbReference type="GO" id="GO:0004397">
    <property type="term" value="F:histidine ammonia-lyase activity"/>
    <property type="evidence" value="ECO:0007669"/>
    <property type="project" value="UniProtKB-UniRule"/>
</dbReference>
<dbReference type="GO" id="GO:0019556">
    <property type="term" value="P:L-histidine catabolic process to glutamate and formamide"/>
    <property type="evidence" value="ECO:0007669"/>
    <property type="project" value="UniProtKB-UniPathway"/>
</dbReference>
<dbReference type="GO" id="GO:0019557">
    <property type="term" value="P:L-histidine catabolic process to glutamate and formate"/>
    <property type="evidence" value="ECO:0007669"/>
    <property type="project" value="UniProtKB-UniPathway"/>
</dbReference>
<dbReference type="CDD" id="cd00332">
    <property type="entry name" value="PAL-HAL"/>
    <property type="match status" value="1"/>
</dbReference>
<dbReference type="FunFam" id="1.10.275.10:FF:000005">
    <property type="entry name" value="Histidine ammonia-lyase"/>
    <property type="match status" value="1"/>
</dbReference>
<dbReference type="FunFam" id="1.20.200.10:FF:000012">
    <property type="entry name" value="Tyrosine ammonia-lyase"/>
    <property type="match status" value="1"/>
</dbReference>
<dbReference type="Gene3D" id="1.20.200.10">
    <property type="entry name" value="Fumarase/aspartase (Central domain)"/>
    <property type="match status" value="1"/>
</dbReference>
<dbReference type="Gene3D" id="1.10.275.10">
    <property type="entry name" value="Fumarase/aspartase (N-terminal domain)"/>
    <property type="match status" value="1"/>
</dbReference>
<dbReference type="HAMAP" id="MF_00229">
    <property type="entry name" value="His_ammonia_lyase"/>
    <property type="match status" value="1"/>
</dbReference>
<dbReference type="InterPro" id="IPR001106">
    <property type="entry name" value="Aromatic_Lyase"/>
</dbReference>
<dbReference type="InterPro" id="IPR024083">
    <property type="entry name" value="Fumarase/histidase_N"/>
</dbReference>
<dbReference type="InterPro" id="IPR005921">
    <property type="entry name" value="HutH"/>
</dbReference>
<dbReference type="InterPro" id="IPR008948">
    <property type="entry name" value="L-Aspartase-like"/>
</dbReference>
<dbReference type="InterPro" id="IPR022313">
    <property type="entry name" value="Phe/His_NH3-lyase_AS"/>
</dbReference>
<dbReference type="NCBIfam" id="TIGR01225">
    <property type="entry name" value="hutH"/>
    <property type="match status" value="1"/>
</dbReference>
<dbReference type="NCBIfam" id="NF006871">
    <property type="entry name" value="PRK09367.1"/>
    <property type="match status" value="1"/>
</dbReference>
<dbReference type="PANTHER" id="PTHR10362">
    <property type="entry name" value="HISTIDINE AMMONIA-LYASE"/>
    <property type="match status" value="1"/>
</dbReference>
<dbReference type="Pfam" id="PF00221">
    <property type="entry name" value="Lyase_aromatic"/>
    <property type="match status" value="1"/>
</dbReference>
<dbReference type="SUPFAM" id="SSF48557">
    <property type="entry name" value="L-aspartase-like"/>
    <property type="match status" value="1"/>
</dbReference>
<dbReference type="PROSITE" id="PS00488">
    <property type="entry name" value="PAL_HISTIDASE"/>
    <property type="match status" value="1"/>
</dbReference>
<proteinExistence type="evidence at transcript level"/>